<feature type="chain" id="PRO_0000093388" description="Broad substrate specificity ATP-binding cassette transporter ABCG2">
    <location>
        <begin position="1"/>
        <end position="657"/>
    </location>
</feature>
<feature type="topological domain" description="Cytoplasmic" evidence="2">
    <location>
        <begin position="1"/>
        <end position="393"/>
    </location>
</feature>
<feature type="transmembrane region" description="Helical" evidence="2">
    <location>
        <begin position="394"/>
        <end position="414"/>
    </location>
</feature>
<feature type="topological domain" description="Extracellular" evidence="2">
    <location>
        <begin position="415"/>
        <end position="428"/>
    </location>
</feature>
<feature type="transmembrane region" description="Helical" evidence="2">
    <location>
        <begin position="429"/>
        <end position="449"/>
    </location>
</feature>
<feature type="topological domain" description="Cytoplasmic" evidence="2">
    <location>
        <begin position="450"/>
        <end position="477"/>
    </location>
</feature>
<feature type="transmembrane region" description="Helical" evidence="2">
    <location>
        <begin position="478"/>
        <end position="498"/>
    </location>
</feature>
<feature type="topological domain" description="Extracellular" evidence="2">
    <location>
        <begin position="499"/>
        <end position="506"/>
    </location>
</feature>
<feature type="transmembrane region" description="Helical" evidence="2">
    <location>
        <begin position="507"/>
        <end position="527"/>
    </location>
</feature>
<feature type="topological domain" description="Cytoplasmic" evidence="2">
    <location>
        <begin position="528"/>
        <end position="535"/>
    </location>
</feature>
<feature type="transmembrane region" description="Helical" evidence="2">
    <location>
        <begin position="536"/>
        <end position="556"/>
    </location>
</feature>
<feature type="topological domain" description="Extracellular" evidence="2">
    <location>
        <begin position="557"/>
        <end position="632"/>
    </location>
</feature>
<feature type="transmembrane region" description="Helical" evidence="2">
    <location>
        <begin position="633"/>
        <end position="653"/>
    </location>
</feature>
<feature type="topological domain" description="Cytoplasmic" evidence="2">
    <location>
        <begin position="654"/>
        <end position="657"/>
    </location>
</feature>
<feature type="domain" description="ABC transporter" evidence="3">
    <location>
        <begin position="48"/>
        <end position="285"/>
    </location>
</feature>
<feature type="domain" description="ABC transmembrane type-2">
    <location>
        <begin position="389"/>
        <end position="653"/>
    </location>
</feature>
<feature type="region of interest" description="Disordered" evidence="4">
    <location>
        <begin position="1"/>
        <end position="24"/>
    </location>
</feature>
<feature type="compositionally biased region" description="Polar residues" evidence="4">
    <location>
        <begin position="13"/>
        <end position="24"/>
    </location>
</feature>
<feature type="binding site" evidence="3">
    <location>
        <begin position="79"/>
        <end position="86"/>
    </location>
    <ligand>
        <name>ATP</name>
        <dbReference type="ChEBI" id="CHEBI:30616"/>
    </ligand>
</feature>
<feature type="binding site" evidence="1">
    <location>
        <begin position="183"/>
        <end position="189"/>
    </location>
    <ligand>
        <name>ATP</name>
        <dbReference type="ChEBI" id="CHEBI:30616"/>
    </ligand>
</feature>
<feature type="binding site" evidence="1">
    <location>
        <position position="210"/>
    </location>
    <ligand>
        <name>ATP</name>
        <dbReference type="ChEBI" id="CHEBI:30616"/>
    </ligand>
</feature>
<feature type="binding site" evidence="1">
    <location>
        <position position="242"/>
    </location>
    <ligand>
        <name>ATP</name>
        <dbReference type="ChEBI" id="CHEBI:30616"/>
    </ligand>
</feature>
<feature type="glycosylation site" description="N-linked (GlcNAc...) asparagine" evidence="2">
    <location>
        <position position="596"/>
    </location>
</feature>
<feature type="glycosylation site" description="N-linked (GlcNAc...) asparagine" evidence="2">
    <location>
        <position position="600"/>
    </location>
</feature>
<feature type="disulfide bond" evidence="1">
    <location>
        <begin position="592"/>
        <end position="610"/>
    </location>
</feature>
<feature type="disulfide bond" description="Interchain" evidence="1">
    <location>
        <position position="603"/>
    </location>
</feature>
<feature type="mutagenesis site" description="Loss of ATP-dependent itaconate export resulting in itaconate cytosolic accumulation." evidence="12">
    <original>E</original>
    <variation>Q</variation>
    <location>
        <position position="210"/>
    </location>
</feature>
<feature type="sequence conflict" description="In Ref. 1; AAD54216." evidence="13" ref="1">
    <original>T</original>
    <variation>M</variation>
    <location>
        <position position="23"/>
    </location>
</feature>
<feature type="sequence conflict" description="In Ref. 1; AAD54216." evidence="13" ref="1">
    <original>V</original>
    <variation>I</variation>
    <location>
        <position position="492"/>
    </location>
</feature>
<feature type="sequence conflict" description="In Ref. 3; AAD09189." evidence="13" ref="3">
    <original>TLIMV</original>
    <variation>GLGAE</variation>
    <location>
        <begin position="512"/>
        <end position="516"/>
    </location>
</feature>
<reference key="1">
    <citation type="journal article" date="1999" name="Cancer Res.">
        <title>The mouse Bcrp1/Mxr/Abcp gene: amplification and overexpression in cell lines selected for resistance to topotecan, mitoxantrone, or doxorubicin.</title>
        <authorList>
            <person name="Allen J.D."/>
            <person name="Brinkhuis R.F."/>
            <person name="Wijnholds J."/>
            <person name="Schinkel A.H."/>
        </authorList>
    </citation>
    <scope>NUCLEOTIDE SEQUENCE [MRNA]</scope>
    <scope>FUNCTION</scope>
    <scope>CATALYTIC ACTIVITY</scope>
    <source>
        <strain>FVB/NJ</strain>
        <tissue>Liver</tissue>
    </source>
</reference>
<reference key="2">
    <citation type="journal article" date="2004" name="Genome Res.">
        <title>The status, quality, and expansion of the NIH full-length cDNA project: the Mammalian Gene Collection (MGC).</title>
        <authorList>
            <consortium name="The MGC Project Team"/>
        </authorList>
    </citation>
    <scope>NUCLEOTIDE SEQUENCE [LARGE SCALE MRNA]</scope>
    <source>
        <strain>C57BL/6NCr</strain>
        <tissue>Hematopoietic stem cell</tissue>
    </source>
</reference>
<reference key="3">
    <citation type="journal article" date="1998" name="Cancer Res.">
        <title>A human placenta-specific ATP-binding cassette gene (ABCP) on chromosome 4q22 that is involved in multidrug resistance.</title>
        <authorList>
            <person name="Allikmets R."/>
            <person name="Schriml L.M."/>
            <person name="Hutchinson A."/>
            <person name="Romano-Spica V."/>
            <person name="Dean M."/>
        </authorList>
    </citation>
    <scope>NUCLEOTIDE SEQUENCE [MRNA] OF 511-657</scope>
    <source>
        <strain>C57BL/6J</strain>
        <tissue>Placenta</tissue>
    </source>
</reference>
<reference key="4">
    <citation type="journal article" date="2000" name="J. Natl. Cancer Inst.">
        <title>Role of breast cancer resistance protein in the bioavailability and fetal penetration of topotecan.</title>
        <authorList>
            <person name="Jonker J.W."/>
            <person name="Smit J.W."/>
            <person name="Brinkhuis R.F."/>
            <person name="Maliepaard M."/>
            <person name="Beijnen J.H."/>
            <person name="Schellens J.H."/>
            <person name="Schinkel A.H."/>
        </authorList>
    </citation>
    <scope>TISSUE SPECIFICITY</scope>
</reference>
<reference key="5">
    <citation type="journal article" date="2001" name="Nat. Med.">
        <title>The ABC transporter Bcrp1/ABCG2 is expressed in a wide variety of stem cells and is a molecular determinant of the side-population phenotype.</title>
        <authorList>
            <person name="Zhou S."/>
            <person name="Schuetz J.D."/>
            <person name="Bunting K.D."/>
            <person name="Colapietro A.M."/>
            <person name="Sampath J."/>
            <person name="Morris J.J."/>
            <person name="Lagutina I."/>
            <person name="Grosveld G.C."/>
            <person name="Osawa M."/>
            <person name="Nakauchi H."/>
            <person name="Sorrentino B.P."/>
        </authorList>
    </citation>
    <scope>FUNCTION</scope>
</reference>
<reference key="6">
    <citation type="journal article" date="2002" name="Mol. Cancer Ther.">
        <title>Potent and specific inhibition of the breast cancer resistance protein multidrug transporter in vitro and in mouse intestine by a novel analogue of fumitremorgin C.</title>
        <authorList>
            <person name="Allen J.D."/>
            <person name="van Loevezijn A."/>
            <person name="Lakhai J.M."/>
            <person name="van der Valk M."/>
            <person name="van Tellingen O."/>
            <person name="Reid G."/>
            <person name="Schellens J.H."/>
            <person name="Koomen G.J."/>
            <person name="Schinkel A.H."/>
        </authorList>
    </citation>
    <scope>FUNCTION</scope>
    <scope>CATALYTIC ACTIVITY</scope>
    <scope>ACTIVITY REGULATION</scope>
</reference>
<reference key="7">
    <citation type="journal article" date="2002" name="Proc. Natl. Acad. Sci. U.S.A.">
        <title>The breast cancer resistance protein protects against a major chlorophyll-derived dietary phototoxin and protoporphyria.</title>
        <authorList>
            <person name="Jonker J.W."/>
            <person name="Buitelaar M."/>
            <person name="Wagenaar E."/>
            <person name="Van Der Valk M.A."/>
            <person name="Scheffer G.L."/>
            <person name="Scheper R.J."/>
            <person name="Plosch T."/>
            <person name="Kuipers F."/>
            <person name="Elferink R.P."/>
            <person name="Rosing H."/>
            <person name="Beijnen J.H."/>
            <person name="Schinkel A.H."/>
        </authorList>
    </citation>
    <scope>FUNCTION</scope>
    <scope>SUBCELLULAR LOCATION</scope>
    <scope>DISRUPTION PHENOTYPE</scope>
</reference>
<reference key="8">
    <citation type="journal article" date="2004" name="J. Biol. Chem.">
        <title>The stem cell marker Bcrp/ABCG2 enhances hypoxic cell survival through interactions with heme.</title>
        <authorList>
            <person name="Krishnamurthy P."/>
            <person name="Ross D.D."/>
            <person name="Nakanishi T."/>
            <person name="Bailey-Dell K."/>
            <person name="Zhou S."/>
            <person name="Mercer K.E."/>
            <person name="Sarkadi B."/>
            <person name="Sorrentino B.P."/>
            <person name="Schuetz J.D."/>
        </authorList>
    </citation>
    <scope>FUNCTION</scope>
    <scope>INDUCTION BY HYPOXIA</scope>
</reference>
<reference key="9">
    <citation type="journal article" date="2007" name="Mol. Cell. Biol.">
        <title>Multidrug transporter ABCG2/breast cancer resistance protein secretes riboflavin (vitamin B2) into milk.</title>
        <authorList>
            <person name="van Herwaarden A.E."/>
            <person name="Wagenaar E."/>
            <person name="Merino G."/>
            <person name="Jonker J.W."/>
            <person name="Rosing H."/>
            <person name="Beijnen J.H."/>
            <person name="Schinkel A.H."/>
        </authorList>
    </citation>
    <scope>FUNCTION</scope>
    <scope>CATALYTIC ACTIVITY</scope>
    <scope>TISSUE SPECIFICITY</scope>
</reference>
<reference key="10">
    <citation type="journal article" date="2010" name="Cell">
        <title>A tissue-specific atlas of mouse protein phosphorylation and expression.</title>
        <authorList>
            <person name="Huttlin E.L."/>
            <person name="Jedrychowski M.P."/>
            <person name="Elias J.E."/>
            <person name="Goswami T."/>
            <person name="Rad R."/>
            <person name="Beausoleil S.A."/>
            <person name="Villen J."/>
            <person name="Haas W."/>
            <person name="Sowa M.E."/>
            <person name="Gygi S.P."/>
        </authorList>
    </citation>
    <scope>IDENTIFICATION BY MASS SPECTROMETRY [LARGE SCALE ANALYSIS]</scope>
    <source>
        <tissue>Kidney</tissue>
        <tissue>Liver</tissue>
        <tissue>Spleen</tissue>
    </source>
</reference>
<reference key="11">
    <citation type="journal article" date="2018" name="Sci. Rep.">
        <title>Identification of ABCG2 as an exporter of uremic toxin indoxyl sulfate in mice and as a crucial factor influencing CKD progression.</title>
        <authorList>
            <person name="Takada T."/>
            <person name="Yamamoto T."/>
            <person name="Matsuo H."/>
            <person name="Tan J.K."/>
            <person name="Ooyama K."/>
            <person name="Sakiyama M."/>
            <person name="Miyata H."/>
            <person name="Yamanashi Y."/>
            <person name="Toyoda Y."/>
            <person name="Higashino T."/>
            <person name="Nakayama A."/>
            <person name="Nakashima A."/>
            <person name="Shinomiya N."/>
            <person name="Ichida K."/>
            <person name="Ooyama H."/>
            <person name="Fujimori S."/>
            <person name="Suzuki H."/>
        </authorList>
    </citation>
    <scope>FUNCTION</scope>
    <scope>CATALYTIC ACTIVITY</scope>
    <scope>BIOPHYSICOCHEMICAL PROPERTIES</scope>
    <scope>DISRUPTION PHENOTYPE</scope>
</reference>
<reference key="12">
    <citation type="journal article" date="2024" name="Dev. Cell">
        <title>Itaconate uptake via SLC13A3 improves hepatic antibacterial innate immunity.</title>
        <authorList>
            <person name="Chen C."/>
            <person name="Liu C."/>
            <person name="Sun P."/>
            <person name="Zhang Z."/>
            <person name="Wang Z."/>
            <person name="Liu P."/>
            <person name="Li X."/>
        </authorList>
    </citation>
    <scope>FUNCTION</scope>
    <scope>TRANSPORTER ACTIVITY</scope>
    <scope>MUTAGENESIS OF GLU-210</scope>
</reference>
<dbReference type="EC" id="7.6.2.2" evidence="5 8"/>
<dbReference type="EMBL" id="AF140218">
    <property type="protein sequence ID" value="AAD54216.1"/>
    <property type="molecule type" value="mRNA"/>
</dbReference>
<dbReference type="EMBL" id="BC053730">
    <property type="protein sequence ID" value="AAH53730.1"/>
    <property type="molecule type" value="mRNA"/>
</dbReference>
<dbReference type="EMBL" id="AF103875">
    <property type="protein sequence ID" value="AAD09189.1"/>
    <property type="molecule type" value="mRNA"/>
</dbReference>
<dbReference type="CCDS" id="CCDS20195.1"/>
<dbReference type="RefSeq" id="NP_036050.1">
    <property type="nucleotide sequence ID" value="NM_011920.3"/>
</dbReference>
<dbReference type="RefSeq" id="XP_006506211.1">
    <property type="nucleotide sequence ID" value="XM_006506148.3"/>
</dbReference>
<dbReference type="RefSeq" id="XP_006506212.1">
    <property type="nucleotide sequence ID" value="XM_006506149.3"/>
</dbReference>
<dbReference type="RefSeq" id="XP_006506213.1">
    <property type="nucleotide sequence ID" value="XM_006506150.3"/>
</dbReference>
<dbReference type="RefSeq" id="XP_006506214.1">
    <property type="nucleotide sequence ID" value="XM_006506151.3"/>
</dbReference>
<dbReference type="RefSeq" id="XP_011239664.1">
    <property type="nucleotide sequence ID" value="XM_011241362.1"/>
</dbReference>
<dbReference type="SMR" id="Q7TMS5"/>
<dbReference type="CORUM" id="Q7TMS5"/>
<dbReference type="FunCoup" id="Q7TMS5">
    <property type="interactions" value="324"/>
</dbReference>
<dbReference type="IntAct" id="Q7TMS5">
    <property type="interactions" value="1"/>
</dbReference>
<dbReference type="STRING" id="10090.ENSMUSP00000031822"/>
<dbReference type="ChEMBL" id="CHEMBL2073705"/>
<dbReference type="GlyCosmos" id="Q7TMS5">
    <property type="glycosylation" value="2 sites, No reported glycans"/>
</dbReference>
<dbReference type="GlyGen" id="Q7TMS5">
    <property type="glycosylation" value="2 sites"/>
</dbReference>
<dbReference type="iPTMnet" id="Q7TMS5"/>
<dbReference type="PhosphoSitePlus" id="Q7TMS5"/>
<dbReference type="SwissPalm" id="Q7TMS5"/>
<dbReference type="jPOST" id="Q7TMS5"/>
<dbReference type="PaxDb" id="10090-ENSMUSP00000031822"/>
<dbReference type="PeptideAtlas" id="Q7TMS5"/>
<dbReference type="ProteomicsDB" id="285819"/>
<dbReference type="Pumba" id="Q7TMS5"/>
<dbReference type="DNASU" id="26357"/>
<dbReference type="GeneID" id="26357"/>
<dbReference type="KEGG" id="mmu:26357"/>
<dbReference type="AGR" id="MGI:1347061"/>
<dbReference type="CTD" id="9429"/>
<dbReference type="MGI" id="MGI:1347061">
    <property type="gene designation" value="Abcg2"/>
</dbReference>
<dbReference type="eggNOG" id="KOG0061">
    <property type="taxonomic scope" value="Eukaryota"/>
</dbReference>
<dbReference type="InParanoid" id="Q7TMS5"/>
<dbReference type="OrthoDB" id="66620at2759"/>
<dbReference type="PhylomeDB" id="Q7TMS5"/>
<dbReference type="TreeFam" id="TF105211"/>
<dbReference type="BRENDA" id="7.6.2.3">
    <property type="organism ID" value="3474"/>
</dbReference>
<dbReference type="Reactome" id="R-MMU-1660661">
    <property type="pathway name" value="Sphingolipid de novo biosynthesis"/>
</dbReference>
<dbReference type="Reactome" id="R-MMU-189451">
    <property type="pathway name" value="Heme biosynthesis"/>
</dbReference>
<dbReference type="Reactome" id="R-MMU-189483">
    <property type="pathway name" value="Heme degradation"/>
</dbReference>
<dbReference type="Reactome" id="R-MMU-917937">
    <property type="pathway name" value="Iron uptake and transport"/>
</dbReference>
<dbReference type="Reactome" id="R-MMU-9753281">
    <property type="pathway name" value="Paracetamol ADME"/>
</dbReference>
<dbReference type="Reactome" id="R-MMU-9793528">
    <property type="pathway name" value="Ciprofloxacin ADME"/>
</dbReference>
<dbReference type="BioGRID-ORCS" id="26357">
    <property type="hits" value="2 hits in 76 CRISPR screens"/>
</dbReference>
<dbReference type="ChiTaRS" id="Abcg2">
    <property type="organism name" value="mouse"/>
</dbReference>
<dbReference type="PRO" id="PR:Q7TMS5"/>
<dbReference type="Proteomes" id="UP000000589">
    <property type="component" value="Unplaced"/>
</dbReference>
<dbReference type="RNAct" id="Q7TMS5">
    <property type="molecule type" value="protein"/>
</dbReference>
<dbReference type="GO" id="GO:0016324">
    <property type="term" value="C:apical plasma membrane"/>
    <property type="evidence" value="ECO:0000314"/>
    <property type="project" value="UniProtKB"/>
</dbReference>
<dbReference type="GO" id="GO:0031526">
    <property type="term" value="C:brush border membrane"/>
    <property type="evidence" value="ECO:0000250"/>
    <property type="project" value="UniProtKB"/>
</dbReference>
<dbReference type="GO" id="GO:0045121">
    <property type="term" value="C:membrane raft"/>
    <property type="evidence" value="ECO:0000250"/>
    <property type="project" value="UniProtKB"/>
</dbReference>
<dbReference type="GO" id="GO:0031966">
    <property type="term" value="C:mitochondrial membrane"/>
    <property type="evidence" value="ECO:0007669"/>
    <property type="project" value="UniProtKB-SubCell"/>
</dbReference>
<dbReference type="GO" id="GO:0005886">
    <property type="term" value="C:plasma membrane"/>
    <property type="evidence" value="ECO:0000304"/>
    <property type="project" value="Reactome"/>
</dbReference>
<dbReference type="GO" id="GO:0008559">
    <property type="term" value="F:ABC-type xenobiotic transporter activity"/>
    <property type="evidence" value="ECO:0007669"/>
    <property type="project" value="UniProtKB-EC"/>
</dbReference>
<dbReference type="GO" id="GO:0005524">
    <property type="term" value="F:ATP binding"/>
    <property type="evidence" value="ECO:0007669"/>
    <property type="project" value="UniProtKB-KW"/>
</dbReference>
<dbReference type="GO" id="GO:0016887">
    <property type="term" value="F:ATP hydrolysis activity"/>
    <property type="evidence" value="ECO:0007669"/>
    <property type="project" value="InterPro"/>
</dbReference>
<dbReference type="GO" id="GO:0042626">
    <property type="term" value="F:ATPase-coupled transmembrane transporter activity"/>
    <property type="evidence" value="ECO:0000250"/>
    <property type="project" value="UniProtKB"/>
</dbReference>
<dbReference type="GO" id="GO:0015225">
    <property type="term" value="F:biotin transmembrane transporter activity"/>
    <property type="evidence" value="ECO:0000315"/>
    <property type="project" value="UniProtKB"/>
</dbReference>
<dbReference type="GO" id="GO:0015562">
    <property type="term" value="F:efflux transmembrane transporter activity"/>
    <property type="evidence" value="ECO:0000315"/>
    <property type="project" value="UniProtKB"/>
</dbReference>
<dbReference type="GO" id="GO:0032217">
    <property type="term" value="F:riboflavin transmembrane transporter activity"/>
    <property type="evidence" value="ECO:0000315"/>
    <property type="project" value="UniProtKB"/>
</dbReference>
<dbReference type="GO" id="GO:0015143">
    <property type="term" value="F:urate transmembrane transporter activity"/>
    <property type="evidence" value="ECO:0000250"/>
    <property type="project" value="UniProtKB"/>
</dbReference>
<dbReference type="GO" id="GO:0015878">
    <property type="term" value="P:biotin transport"/>
    <property type="evidence" value="ECO:0000315"/>
    <property type="project" value="UniProtKB"/>
</dbReference>
<dbReference type="GO" id="GO:0006869">
    <property type="term" value="P:lipid transport"/>
    <property type="evidence" value="ECO:0007669"/>
    <property type="project" value="UniProtKB-KW"/>
</dbReference>
<dbReference type="GO" id="GO:0097744">
    <property type="term" value="P:renal urate salt excretion"/>
    <property type="evidence" value="ECO:0000250"/>
    <property type="project" value="UniProtKB"/>
</dbReference>
<dbReference type="GO" id="GO:0032218">
    <property type="term" value="P:riboflavin transport"/>
    <property type="evidence" value="ECO:0000315"/>
    <property type="project" value="UniProtKB"/>
</dbReference>
<dbReference type="GO" id="GO:0055085">
    <property type="term" value="P:transmembrane transport"/>
    <property type="evidence" value="ECO:0000250"/>
    <property type="project" value="UniProtKB"/>
</dbReference>
<dbReference type="CDD" id="cd03213">
    <property type="entry name" value="ABCG_EPDR"/>
    <property type="match status" value="1"/>
</dbReference>
<dbReference type="FunFam" id="3.40.50.300:FF:000622">
    <property type="entry name" value="ATP-binding cassette sub-family G member 2"/>
    <property type="match status" value="1"/>
</dbReference>
<dbReference type="Gene3D" id="3.40.50.300">
    <property type="entry name" value="P-loop containing nucleotide triphosphate hydrolases"/>
    <property type="match status" value="1"/>
</dbReference>
<dbReference type="InterPro" id="IPR003593">
    <property type="entry name" value="AAA+_ATPase"/>
</dbReference>
<dbReference type="InterPro" id="IPR013525">
    <property type="entry name" value="ABC2_TM"/>
</dbReference>
<dbReference type="InterPro" id="IPR003439">
    <property type="entry name" value="ABC_transporter-like_ATP-bd"/>
</dbReference>
<dbReference type="InterPro" id="IPR043926">
    <property type="entry name" value="ABCG_dom"/>
</dbReference>
<dbReference type="InterPro" id="IPR050352">
    <property type="entry name" value="ABCG_transporters"/>
</dbReference>
<dbReference type="InterPro" id="IPR027417">
    <property type="entry name" value="P-loop_NTPase"/>
</dbReference>
<dbReference type="PANTHER" id="PTHR48041">
    <property type="entry name" value="ABC TRANSPORTER G FAMILY MEMBER 28"/>
    <property type="match status" value="1"/>
</dbReference>
<dbReference type="PANTHER" id="PTHR48041:SF92">
    <property type="entry name" value="BROAD SUBSTRATE SPECIFICITY ATP-BINDING CASSETTE TRANSPORTER ABCG2"/>
    <property type="match status" value="1"/>
</dbReference>
<dbReference type="Pfam" id="PF01061">
    <property type="entry name" value="ABC2_membrane"/>
    <property type="match status" value="1"/>
</dbReference>
<dbReference type="Pfam" id="PF19055">
    <property type="entry name" value="ABC2_membrane_7"/>
    <property type="match status" value="1"/>
</dbReference>
<dbReference type="Pfam" id="PF00005">
    <property type="entry name" value="ABC_tran"/>
    <property type="match status" value="1"/>
</dbReference>
<dbReference type="SMART" id="SM00382">
    <property type="entry name" value="AAA"/>
    <property type="match status" value="1"/>
</dbReference>
<dbReference type="SUPFAM" id="SSF52540">
    <property type="entry name" value="P-loop containing nucleoside triphosphate hydrolases"/>
    <property type="match status" value="1"/>
</dbReference>
<dbReference type="PROSITE" id="PS50893">
    <property type="entry name" value="ABC_TRANSPORTER_2"/>
    <property type="match status" value="1"/>
</dbReference>
<proteinExistence type="evidence at protein level"/>
<comment type="function">
    <text evidence="1 5 7 8 9 10 11 12 14">Broad substrate specificity ATP-dependent transporter of the ATP-binding cassette (ABC) family that actively extrudes a wide variety of physiological compounds, dietary toxins and xenobiotics from cells (PubMed:10485464, PubMed:12429862, PubMed:12477054, PubMed:17145775, PubMed:30042379). Involved in porphyrin homeostasis, mediating the export of protoporphyrin IX (PPIX) from both mitochondria to cytosol and cytosol to extracellular space, it also functions in the cellular export of heme (PubMed:12429862, PubMed:15044468). Also mediates the efflux of sphingosine-1-P from cells (By similarity). Acts as a urate exporter functioning in both renal and extrarenal urate excretion (By similarity). In kidney, it also functions as a physiological exporter of the uremic toxin indoxyl sulfate (PubMed:30042379). Also involved in the excretion of steroids like estrone 3-sulfate/E1S, 3beta-sulfooxy-androst-5-en-17-one/DHEAS, and other sulfate conjugates (By similarity). Mediates the secretion of the riboflavin and biotin vitamins into milk (PubMed:17145775). Extrudes pheophorbide a, a phototoxic porphyrin catabolite of chlorophyll, reducing its bioavailability (PubMed:12429862). Plays an important role in the exclusion of xenobiotics from the brain (PubMed:10485464). It confers to cells a resistance to multiple drugs and other xenobiotics including mitoxantrone, pheophorbide, camptothecin, methotrexate, azidothymidine, and the anthracyclines daunorubicin and doxorubicin, through the control of their efflux (PubMed:12477054). In placenta, it limits the penetration of drugs from the maternal plasma into the fetus (PubMed:12429862). May play a role in early stem cell self-renewal by blocking differentiation (Probable). In inflammatory macrophages, exports itaconate from the cytosol to the extracellular compartment and limits the activation of TFEB-dependent lysosome biogenesis involved in antibacterial innate immune response.</text>
</comment>
<comment type="catalytic activity">
    <reaction evidence="5 8">
        <text>ATP + H2O + xenobioticSide 1 = ADP + phosphate + xenobioticSide 2.</text>
        <dbReference type="EC" id="7.6.2.2"/>
    </reaction>
</comment>
<comment type="catalytic activity">
    <reaction evidence="10">
        <text>riboflavin(in) + ATP + H2O = riboflavin(out) + ADP + phosphate + H(+)</text>
        <dbReference type="Rhea" id="RHEA:61352"/>
        <dbReference type="ChEBI" id="CHEBI:15377"/>
        <dbReference type="ChEBI" id="CHEBI:15378"/>
        <dbReference type="ChEBI" id="CHEBI:30616"/>
        <dbReference type="ChEBI" id="CHEBI:43474"/>
        <dbReference type="ChEBI" id="CHEBI:57986"/>
        <dbReference type="ChEBI" id="CHEBI:456216"/>
    </reaction>
    <physiologicalReaction direction="left-to-right" evidence="10">
        <dbReference type="Rhea" id="RHEA:61353"/>
    </physiologicalReaction>
</comment>
<comment type="catalytic activity">
    <reaction evidence="10">
        <text>pheophorbide a(in) + ATP + H2O = pheophorbide a(out) + ADP + phosphate + H(+)</text>
        <dbReference type="Rhea" id="RHEA:61360"/>
        <dbReference type="ChEBI" id="CHEBI:15377"/>
        <dbReference type="ChEBI" id="CHEBI:15378"/>
        <dbReference type="ChEBI" id="CHEBI:30616"/>
        <dbReference type="ChEBI" id="CHEBI:43474"/>
        <dbReference type="ChEBI" id="CHEBI:58687"/>
        <dbReference type="ChEBI" id="CHEBI:456216"/>
    </reaction>
    <physiologicalReaction direction="left-to-right" evidence="10">
        <dbReference type="Rhea" id="RHEA:61361"/>
    </physiologicalReaction>
</comment>
<comment type="catalytic activity">
    <reaction evidence="1">
        <text>urate(in) + ATP + H2O = urate(out) + ADP + phosphate + H(+)</text>
        <dbReference type="Rhea" id="RHEA:16461"/>
        <dbReference type="ChEBI" id="CHEBI:15377"/>
        <dbReference type="ChEBI" id="CHEBI:15378"/>
        <dbReference type="ChEBI" id="CHEBI:17775"/>
        <dbReference type="ChEBI" id="CHEBI:30616"/>
        <dbReference type="ChEBI" id="CHEBI:43474"/>
        <dbReference type="ChEBI" id="CHEBI:456216"/>
    </reaction>
    <physiologicalReaction direction="left-to-right" evidence="1">
        <dbReference type="Rhea" id="RHEA:16462"/>
    </physiologicalReaction>
</comment>
<comment type="catalytic activity">
    <reaction evidence="11">
        <text>indoxyl sulfate(in) + ATP + H2O = indoxyl sulfate(out) + ADP + phosphate + H(+)</text>
        <dbReference type="Rhea" id="RHEA:61332"/>
        <dbReference type="ChEBI" id="CHEBI:15377"/>
        <dbReference type="ChEBI" id="CHEBI:15378"/>
        <dbReference type="ChEBI" id="CHEBI:30616"/>
        <dbReference type="ChEBI" id="CHEBI:43474"/>
        <dbReference type="ChEBI" id="CHEBI:144643"/>
        <dbReference type="ChEBI" id="CHEBI:456216"/>
    </reaction>
    <physiologicalReaction direction="left-to-right" evidence="11">
        <dbReference type="Rhea" id="RHEA:61333"/>
    </physiologicalReaction>
</comment>
<comment type="catalytic activity">
    <reaction evidence="1">
        <text>sphing-4-enine 1-phosphate(in) + ATP + H2O = sphing-4-enine 1-phosphate(out) + ADP + phosphate + H(+)</text>
        <dbReference type="Rhea" id="RHEA:38951"/>
        <dbReference type="ChEBI" id="CHEBI:15377"/>
        <dbReference type="ChEBI" id="CHEBI:15378"/>
        <dbReference type="ChEBI" id="CHEBI:30616"/>
        <dbReference type="ChEBI" id="CHEBI:43474"/>
        <dbReference type="ChEBI" id="CHEBI:60119"/>
        <dbReference type="ChEBI" id="CHEBI:456216"/>
    </reaction>
    <physiologicalReaction direction="left-to-right" evidence="1">
        <dbReference type="Rhea" id="RHEA:38952"/>
    </physiologicalReaction>
</comment>
<comment type="catalytic activity">
    <reaction evidence="1">
        <text>estrone 3-sulfate(in) + ATP + H2O = estrone 3-sulfate(out) + ADP + phosphate + H(+)</text>
        <dbReference type="Rhea" id="RHEA:61348"/>
        <dbReference type="ChEBI" id="CHEBI:15377"/>
        <dbReference type="ChEBI" id="CHEBI:15378"/>
        <dbReference type="ChEBI" id="CHEBI:30616"/>
        <dbReference type="ChEBI" id="CHEBI:43474"/>
        <dbReference type="ChEBI" id="CHEBI:60050"/>
        <dbReference type="ChEBI" id="CHEBI:456216"/>
    </reaction>
    <physiologicalReaction direction="left-to-right" evidence="1">
        <dbReference type="Rhea" id="RHEA:61349"/>
    </physiologicalReaction>
</comment>
<comment type="catalytic activity">
    <reaction evidence="1">
        <text>dehydroepiandrosterone 3-sulfate(in) + ATP + H2O = dehydroepiandrosterone 3-sulfate(out) + ADP + phosphate + H(+)</text>
        <dbReference type="Rhea" id="RHEA:61364"/>
        <dbReference type="ChEBI" id="CHEBI:15377"/>
        <dbReference type="ChEBI" id="CHEBI:15378"/>
        <dbReference type="ChEBI" id="CHEBI:30616"/>
        <dbReference type="ChEBI" id="CHEBI:43474"/>
        <dbReference type="ChEBI" id="CHEBI:57905"/>
        <dbReference type="ChEBI" id="CHEBI:456216"/>
    </reaction>
    <physiologicalReaction direction="left-to-right" evidence="1">
        <dbReference type="Rhea" id="RHEA:61365"/>
    </physiologicalReaction>
</comment>
<comment type="catalytic activity">
    <reaction evidence="1">
        <text>4-methylumbelliferone sulfate(in) + ATP + H2O = 4-methylumbelliferone sulfate(out) + ADP + phosphate + H(+)</text>
        <dbReference type="Rhea" id="RHEA:61368"/>
        <dbReference type="ChEBI" id="CHEBI:15377"/>
        <dbReference type="ChEBI" id="CHEBI:15378"/>
        <dbReference type="ChEBI" id="CHEBI:30616"/>
        <dbReference type="ChEBI" id="CHEBI:43474"/>
        <dbReference type="ChEBI" id="CHEBI:144581"/>
        <dbReference type="ChEBI" id="CHEBI:456216"/>
    </reaction>
    <physiologicalReaction direction="left-to-right" evidence="1">
        <dbReference type="Rhea" id="RHEA:61369"/>
    </physiologicalReaction>
</comment>
<comment type="catalytic activity">
    <reaction evidence="1">
        <text>5,7-dimethyl-2-methylamino-4-(3-pyridylmethyl)-1,3-benzothiazol-6-yl beta-D-glucuronate(in) + ATP + H2O = 5,7-dimethyl-2-methylamino-4-(3-pyridylmethyl)-1,3-benzothiazol-6-yl beta-D-glucuronate(out) + ADP + phosphate + H(+)</text>
        <dbReference type="Rhea" id="RHEA:61384"/>
        <dbReference type="ChEBI" id="CHEBI:15377"/>
        <dbReference type="ChEBI" id="CHEBI:15378"/>
        <dbReference type="ChEBI" id="CHEBI:30616"/>
        <dbReference type="ChEBI" id="CHEBI:43474"/>
        <dbReference type="ChEBI" id="CHEBI:144584"/>
        <dbReference type="ChEBI" id="CHEBI:456216"/>
    </reaction>
    <physiologicalReaction direction="left-to-right" evidence="1">
        <dbReference type="Rhea" id="RHEA:61385"/>
    </physiologicalReaction>
</comment>
<comment type="catalytic activity">
    <reaction evidence="1">
        <text>4-methylumbelliferone beta-D-glucuronate(in) + ATP + H2O = 4-methylumbelliferone beta-D-glucuronate(out) + ADP + phosphate + H(+)</text>
        <dbReference type="Rhea" id="RHEA:61372"/>
        <dbReference type="ChEBI" id="CHEBI:15377"/>
        <dbReference type="ChEBI" id="CHEBI:15378"/>
        <dbReference type="ChEBI" id="CHEBI:30616"/>
        <dbReference type="ChEBI" id="CHEBI:43474"/>
        <dbReference type="ChEBI" id="CHEBI:144582"/>
        <dbReference type="ChEBI" id="CHEBI:456216"/>
    </reaction>
    <physiologicalReaction direction="left-to-right" evidence="1">
        <dbReference type="Rhea" id="RHEA:61373"/>
    </physiologicalReaction>
</comment>
<comment type="catalytic activity">
    <reaction evidence="1">
        <text>5,7-dimethyl-2-methylamino-4-(3-pyridylmethyl)-1,3-benzothiazol-6-yl sulfate(in) + ATP + H2O = 5,7-dimethyl-2-methylamino-4-(3-pyridylmethyl)-1,3-benzothiazol-6-yl sulfate(out) + ADP + phosphate + H(+)</text>
        <dbReference type="Rhea" id="RHEA:61376"/>
        <dbReference type="ChEBI" id="CHEBI:15377"/>
        <dbReference type="ChEBI" id="CHEBI:15378"/>
        <dbReference type="ChEBI" id="CHEBI:30616"/>
        <dbReference type="ChEBI" id="CHEBI:43474"/>
        <dbReference type="ChEBI" id="CHEBI:144583"/>
        <dbReference type="ChEBI" id="CHEBI:456216"/>
    </reaction>
    <physiologicalReaction direction="left-to-right" evidence="1">
        <dbReference type="Rhea" id="RHEA:61377"/>
    </physiologicalReaction>
</comment>
<comment type="catalytic activity">
    <reaction evidence="1">
        <text>17beta-estradiol 17-O-(beta-D-glucuronate)(in) + ATP + H2O = 17beta-estradiol 17-O-(beta-D-glucuronate)(out) + ADP + phosphate + H(+)</text>
        <dbReference type="Rhea" id="RHEA:60128"/>
        <dbReference type="ChEBI" id="CHEBI:15377"/>
        <dbReference type="ChEBI" id="CHEBI:15378"/>
        <dbReference type="ChEBI" id="CHEBI:30616"/>
        <dbReference type="ChEBI" id="CHEBI:43474"/>
        <dbReference type="ChEBI" id="CHEBI:82961"/>
        <dbReference type="ChEBI" id="CHEBI:456216"/>
    </reaction>
    <physiologicalReaction direction="left-to-right" evidence="1">
        <dbReference type="Rhea" id="RHEA:60129"/>
    </physiologicalReaction>
</comment>
<comment type="catalytic activity">
    <reaction evidence="1">
        <text>methotrexate(in) + ATP + H2O = methotrexate(out) + ADP + phosphate + H(+)</text>
        <dbReference type="Rhea" id="RHEA:61356"/>
        <dbReference type="ChEBI" id="CHEBI:15377"/>
        <dbReference type="ChEBI" id="CHEBI:15378"/>
        <dbReference type="ChEBI" id="CHEBI:30616"/>
        <dbReference type="ChEBI" id="CHEBI:43474"/>
        <dbReference type="ChEBI" id="CHEBI:50681"/>
        <dbReference type="ChEBI" id="CHEBI:456216"/>
    </reaction>
    <physiologicalReaction direction="left-to-right" evidence="1">
        <dbReference type="Rhea" id="RHEA:61357"/>
    </physiologicalReaction>
</comment>
<comment type="catalytic activity">
    <reaction evidence="12">
        <text>itaconate(in) + ATP + H2O = itaconate(out) + ADP + phosphate + H(+)</text>
        <dbReference type="Rhea" id="RHEA:82291"/>
        <dbReference type="ChEBI" id="CHEBI:15377"/>
        <dbReference type="ChEBI" id="CHEBI:15378"/>
        <dbReference type="ChEBI" id="CHEBI:17240"/>
        <dbReference type="ChEBI" id="CHEBI:30616"/>
        <dbReference type="ChEBI" id="CHEBI:43474"/>
        <dbReference type="ChEBI" id="CHEBI:456216"/>
    </reaction>
    <physiologicalReaction direction="left-to-right" evidence="12">
        <dbReference type="Rhea" id="RHEA:82292"/>
    </physiologicalReaction>
</comment>
<comment type="activity regulation">
    <text evidence="8">Specifically inhibited by the fungal toxin fumitremorgin C and Ko143.</text>
</comment>
<comment type="biophysicochemical properties">
    <kinetics>
        <KM evidence="11">25.3 mM for indoxyl sulfate</KM>
        <Vmax evidence="11">5.27 nmol/min/mg enzyme for indoxyl sulfate transport</Vmax>
    </kinetics>
</comment>
<comment type="subunit">
    <text evidence="1">Homodimer; disulfide-linked. The minimal functional unit is a homodimer, but the major oligomeric form in plasma membrane is a homotetramer with possibility of higher order oligomerization up to homododecamers.</text>
</comment>
<comment type="subcellular location">
    <subcellularLocation>
        <location evidence="1">Cell membrane</location>
        <topology evidence="2">Multi-pass membrane protein</topology>
    </subcellularLocation>
    <subcellularLocation>
        <location evidence="7">Apical cell membrane</location>
        <topology evidence="2">Multi-pass membrane protein</topology>
    </subcellularLocation>
    <subcellularLocation>
        <location evidence="1">Mitochondrion membrane</location>
        <topology evidence="2">Multi-pass membrane protein</topology>
    </subcellularLocation>
    <text evidence="1">Enriched in membrane lipid rafts.</text>
</comment>
<comment type="tissue specificity">
    <text evidence="6 7 10">Highly expressed in kidney. Lower expression in liver, colon, heart, spleen, and placenta (PubMed:11036110). Expressed in mammary gland (PubMed:17145775). Expressed in intestinal villi and renal proximal tubules, hepatic bile canalicular membranes, and placental labyrinth cells (at protein level) (PubMed:12429862).</text>
</comment>
<comment type="induction">
    <text evidence="9">Up-regulated upon hypoxia.</text>
</comment>
<comment type="domain">
    <text evidence="1">The extracellular loop 3 (ECL3) is involved in binding porphyrins and transfer them to other carriers, probably albumin.</text>
</comment>
<comment type="PTM">
    <text evidence="1">N-glycosylated. Glycosylation-deficient ABCG2 is normally expressed and functional.</text>
</comment>
<comment type="PTM">
    <text evidence="1">Phosphorylated. Phosphorylation may regulate the localization to the plasma membrane, the homooligomerization and therefore, the activity of the transporter.</text>
</comment>
<comment type="disruption phenotype">
    <text evidence="7 11">Mice lacking Abcg2 are born at the expected Mendelian ratio and do not display overt phenotype (PubMed:12429862). However, under specific housing conditions, they show phototoxic skin lesions induced by pheophorbide a, a porphyrin catabolite of chlorophyll found in their diet, that accumulates in mice plasma (PubMed:12429862). They also accumulate a red substance in their bile and display protoporphyria with an accumulation of protoporphyrin IX (PPIX) in erythrocytes (PubMed:12429862). Mice lacking Abcg2 present decreased elimination of some uremic toxins like indoxyl sulfate leading to their accumulation in plasma (PubMed:30042379). They also show reduced survival rate upon adenine-induced chronic kidney disease (PubMed:30042379).</text>
</comment>
<comment type="similarity">
    <text evidence="13">Belongs to the ABC transporter superfamily. ABCG family. Eye pigment precursor importer (TC 3.A.1.204) subfamily.</text>
</comment>
<sequence length="657" mass="72978">MSSSNDHVLVPMSQRNNNGLPRTNSRAVRTLAEGDVLSFHHITYRVKVKSGFLVRKTVEKEILSDINGIMKPGLNAILGPTGGGKSSLLDVLAARKDPKGLSGDVLINGAPQPAHFKCCSGYVVQDDVVMGTLTVRENLQFSAALRLPTTMKNHEKNERINTIIKELGLEKVADSKVGTQFIRGISGGERKRTSIGMELITDPSILFLDEPTTGLDSSTANAVLLLLKRMSKQGRTIIFSIHQPRYSIFKLFDSLTLLASGKLVFHGPAQKALEYFASAGYHCEPYNNPADFFLDVINGDSSAVMLNREEQDNEANKTEEPSKGEKPVIENLSEFYINSAIYGETKAELDQLPGAQEKKGTSAFKEPVYVTSFCHQLRWIARRSFKNLLGNPQASVAQLIVTVILGLIIGAIYFDLKYDAAGMQNRAGVLFFLTTNQCFSSVSAVELFVVEKKLFIHEYISGYYRVSSYFFGKVMSDLLPMRFLPSVIFTCVLYFMLGLKKTVDAFFIMMFTLIMVAYTASSMALAIATGQSVVSVATLLMTIAFVFMMLFSGLLVNLRTIGPWLSWLQYFSIPRYGFTALQYNEFLGQEFCPGFNVTDNSTCVNSYAICTGNEYLINQGIELSPWGLWKNHVALACMIIIFLTIAYLKLLFLKKYS</sequence>
<keyword id="KW-0067">ATP-binding</keyword>
<keyword id="KW-1003">Cell membrane</keyword>
<keyword id="KW-1015">Disulfide bond</keyword>
<keyword id="KW-0325">Glycoprotein</keyword>
<keyword id="KW-0445">Lipid transport</keyword>
<keyword id="KW-0472">Membrane</keyword>
<keyword id="KW-0496">Mitochondrion</keyword>
<keyword id="KW-0547">Nucleotide-binding</keyword>
<keyword id="KW-0597">Phosphoprotein</keyword>
<keyword id="KW-1185">Reference proteome</keyword>
<keyword id="KW-1278">Translocase</keyword>
<keyword id="KW-0812">Transmembrane</keyword>
<keyword id="KW-1133">Transmembrane helix</keyword>
<keyword id="KW-0813">Transport</keyword>
<evidence type="ECO:0000250" key="1">
    <source>
        <dbReference type="UniProtKB" id="Q9UNQ0"/>
    </source>
</evidence>
<evidence type="ECO:0000255" key="2"/>
<evidence type="ECO:0000255" key="3">
    <source>
        <dbReference type="PROSITE-ProRule" id="PRU00434"/>
    </source>
</evidence>
<evidence type="ECO:0000256" key="4">
    <source>
        <dbReference type="SAM" id="MobiDB-lite"/>
    </source>
</evidence>
<evidence type="ECO:0000269" key="5">
    <source>
    </source>
</evidence>
<evidence type="ECO:0000269" key="6">
    <source>
    </source>
</evidence>
<evidence type="ECO:0000269" key="7">
    <source>
    </source>
</evidence>
<evidence type="ECO:0000269" key="8">
    <source>
    </source>
</evidence>
<evidence type="ECO:0000269" key="9">
    <source>
    </source>
</evidence>
<evidence type="ECO:0000269" key="10">
    <source>
    </source>
</evidence>
<evidence type="ECO:0000269" key="11">
    <source>
    </source>
</evidence>
<evidence type="ECO:0000269" key="12">
    <source>
    </source>
</evidence>
<evidence type="ECO:0000305" key="13"/>
<evidence type="ECO:0000305" key="14">
    <source>
    </source>
</evidence>
<accession>Q7TMS5</accession>
<accession>Q9R004</accession>
<accession>Q9Z1T0</accession>
<name>ABCG2_MOUSE</name>
<organism>
    <name type="scientific">Mus musculus</name>
    <name type="common">Mouse</name>
    <dbReference type="NCBI Taxonomy" id="10090"/>
    <lineage>
        <taxon>Eukaryota</taxon>
        <taxon>Metazoa</taxon>
        <taxon>Chordata</taxon>
        <taxon>Craniata</taxon>
        <taxon>Vertebrata</taxon>
        <taxon>Euteleostomi</taxon>
        <taxon>Mammalia</taxon>
        <taxon>Eutheria</taxon>
        <taxon>Euarchontoglires</taxon>
        <taxon>Glires</taxon>
        <taxon>Rodentia</taxon>
        <taxon>Myomorpha</taxon>
        <taxon>Muroidea</taxon>
        <taxon>Muridae</taxon>
        <taxon>Murinae</taxon>
        <taxon>Mus</taxon>
        <taxon>Mus</taxon>
    </lineage>
</organism>
<gene>
    <name type="primary">Abcg2</name>
    <name type="synonym">Abcp</name>
    <name type="synonym">Bcrp1</name>
</gene>
<protein>
    <recommendedName>
        <fullName evidence="13">Broad substrate specificity ATP-binding cassette transporter ABCG2</fullName>
        <ecNumber evidence="5 8">7.6.2.2</ecNumber>
    </recommendedName>
    <alternativeName>
        <fullName>ATP-binding cassette sub-family G member 2</fullName>
    </alternativeName>
    <alternativeName>
        <fullName>Breast cancer resistance protein 1 homolog</fullName>
    </alternativeName>
    <alternativeName>
        <fullName>Urate exporter</fullName>
    </alternativeName>
    <cdAntigenName>CD338</cdAntigenName>
</protein>